<sequence length="562" mass="60462">MTTTTTVKSDIEIAQEASMKKIQEIAADLNILEDELEPYGHYKGKLSLDIFKRLQNEKDGKVVLVTAINPTPAGEGKSTVTVGLGQAFNKIGKKTVIALREPSLGPTMGLKGGAAGGGFSQVVPMEDINLHFTGDIHAITTANNALAAFIDNHIQQGNTLGIDTRKIVWKRCVDLNDRALRNVVIGLGGPVQGVPREDGFDITVASEIMAVFCLATDIQDLKARLSRIVVAYNFANQPVTVKDLGVEGALTLLLKDALKPNLVQTLENTPAIIHGGPFANIAHGCNSVIATTMAAKLGDYVITEAGFGADLGAEKFLDIKARAAGIKPEAVVIVATIRALKMHGGVAKDQLKEENVDALAKGMENLQKHVETIQSFGVPFVIAINKFITDTDAEVAYLQEWCNERGYAVSLTEVWEKGGQGGVDLAEKVLKEIEKGENNYAPLYELELPLEEKIRTIAQKVYGAKDIEFAPKARKQLAQYEGEGWSNLPICMAKTQYSLSDDATKLGRPSDFIVTIRELKPSIGAGFIVALTGTMLTMPGLPKQPAALQMDVNEDGKAVGLF</sequence>
<accession>A0RD97</accession>
<feature type="chain" id="PRO_0000293033" description="Formate--tetrahydrofolate ligase">
    <location>
        <begin position="1"/>
        <end position="562"/>
    </location>
</feature>
<feature type="binding site" evidence="1">
    <location>
        <begin position="71"/>
        <end position="78"/>
    </location>
    <ligand>
        <name>ATP</name>
        <dbReference type="ChEBI" id="CHEBI:30616"/>
    </ligand>
</feature>
<protein>
    <recommendedName>
        <fullName evidence="1">Formate--tetrahydrofolate ligase</fullName>
        <ecNumber evidence="1">6.3.4.3</ecNumber>
    </recommendedName>
    <alternativeName>
        <fullName evidence="1">Formyltetrahydrofolate synthetase</fullName>
        <shortName evidence="1">FHS</shortName>
        <shortName evidence="1">FTHFS</shortName>
    </alternativeName>
</protein>
<organism>
    <name type="scientific">Bacillus thuringiensis (strain Al Hakam)</name>
    <dbReference type="NCBI Taxonomy" id="412694"/>
    <lineage>
        <taxon>Bacteria</taxon>
        <taxon>Bacillati</taxon>
        <taxon>Bacillota</taxon>
        <taxon>Bacilli</taxon>
        <taxon>Bacillales</taxon>
        <taxon>Bacillaceae</taxon>
        <taxon>Bacillus</taxon>
        <taxon>Bacillus cereus group</taxon>
    </lineage>
</organism>
<name>FTHS_BACAH</name>
<keyword id="KW-0067">ATP-binding</keyword>
<keyword id="KW-0436">Ligase</keyword>
<keyword id="KW-0547">Nucleotide-binding</keyword>
<keyword id="KW-0554">One-carbon metabolism</keyword>
<gene>
    <name evidence="1" type="primary">fhs</name>
    <name type="ordered locus">BALH_1871</name>
</gene>
<comment type="catalytic activity">
    <reaction evidence="1">
        <text>(6S)-5,6,7,8-tetrahydrofolate + formate + ATP = (6R)-10-formyltetrahydrofolate + ADP + phosphate</text>
        <dbReference type="Rhea" id="RHEA:20221"/>
        <dbReference type="ChEBI" id="CHEBI:15740"/>
        <dbReference type="ChEBI" id="CHEBI:30616"/>
        <dbReference type="ChEBI" id="CHEBI:43474"/>
        <dbReference type="ChEBI" id="CHEBI:57453"/>
        <dbReference type="ChEBI" id="CHEBI:195366"/>
        <dbReference type="ChEBI" id="CHEBI:456216"/>
        <dbReference type="EC" id="6.3.4.3"/>
    </reaction>
</comment>
<comment type="pathway">
    <text evidence="1">One-carbon metabolism; tetrahydrofolate interconversion.</text>
</comment>
<comment type="similarity">
    <text evidence="1">Belongs to the formate--tetrahydrofolate ligase family.</text>
</comment>
<comment type="sequence caution" evidence="2">
    <conflict type="erroneous initiation">
        <sequence resource="EMBL-CDS" id="ABK85190"/>
    </conflict>
</comment>
<proteinExistence type="inferred from homology"/>
<reference key="1">
    <citation type="journal article" date="2007" name="J. Bacteriol.">
        <title>The complete genome sequence of Bacillus thuringiensis Al Hakam.</title>
        <authorList>
            <person name="Challacombe J.F."/>
            <person name="Altherr M.R."/>
            <person name="Xie G."/>
            <person name="Bhotika S.S."/>
            <person name="Brown N."/>
            <person name="Bruce D."/>
            <person name="Campbell C.S."/>
            <person name="Campbell M.L."/>
            <person name="Chen J."/>
            <person name="Chertkov O."/>
            <person name="Cleland C."/>
            <person name="Dimitrijevic M."/>
            <person name="Doggett N.A."/>
            <person name="Fawcett J.J."/>
            <person name="Glavina T."/>
            <person name="Goodwin L.A."/>
            <person name="Green L.D."/>
            <person name="Han C.S."/>
            <person name="Hill K.K."/>
            <person name="Hitchcock P."/>
            <person name="Jackson P.J."/>
            <person name="Keim P."/>
            <person name="Kewalramani A.R."/>
            <person name="Longmire J."/>
            <person name="Lucas S."/>
            <person name="Malfatti S."/>
            <person name="Martinez D."/>
            <person name="McMurry K."/>
            <person name="Meincke L.J."/>
            <person name="Misra M."/>
            <person name="Moseman B.L."/>
            <person name="Mundt M."/>
            <person name="Munk A.C."/>
            <person name="Okinaka R.T."/>
            <person name="Parson-Quintana B."/>
            <person name="Reilly L.P."/>
            <person name="Richardson P."/>
            <person name="Robinson D.L."/>
            <person name="Saunders E."/>
            <person name="Tapia R."/>
            <person name="Tesmer J.G."/>
            <person name="Thayer N."/>
            <person name="Thompson L.S."/>
            <person name="Tice H."/>
            <person name="Ticknor L.O."/>
            <person name="Wills P.L."/>
            <person name="Gilna P."/>
            <person name="Brettin T.S."/>
        </authorList>
    </citation>
    <scope>NUCLEOTIDE SEQUENCE [LARGE SCALE GENOMIC DNA]</scope>
    <source>
        <strain>Al Hakam</strain>
    </source>
</reference>
<evidence type="ECO:0000255" key="1">
    <source>
        <dbReference type="HAMAP-Rule" id="MF_01543"/>
    </source>
</evidence>
<evidence type="ECO:0000305" key="2"/>
<dbReference type="EC" id="6.3.4.3" evidence="1"/>
<dbReference type="EMBL" id="CP000485">
    <property type="protein sequence ID" value="ABK85190.1"/>
    <property type="status" value="ALT_INIT"/>
    <property type="molecule type" value="Genomic_DNA"/>
</dbReference>
<dbReference type="RefSeq" id="WP_001985392.1">
    <property type="nucleotide sequence ID" value="NC_008600.1"/>
</dbReference>
<dbReference type="SMR" id="A0RD97"/>
<dbReference type="KEGG" id="btl:BALH_1871"/>
<dbReference type="HOGENOM" id="CLU_003601_3_3_9"/>
<dbReference type="UniPathway" id="UPA00193"/>
<dbReference type="GO" id="GO:0005524">
    <property type="term" value="F:ATP binding"/>
    <property type="evidence" value="ECO:0007669"/>
    <property type="project" value="UniProtKB-UniRule"/>
</dbReference>
<dbReference type="GO" id="GO:0004329">
    <property type="term" value="F:formate-tetrahydrofolate ligase activity"/>
    <property type="evidence" value="ECO:0007669"/>
    <property type="project" value="UniProtKB-UniRule"/>
</dbReference>
<dbReference type="GO" id="GO:0035999">
    <property type="term" value="P:tetrahydrofolate interconversion"/>
    <property type="evidence" value="ECO:0007669"/>
    <property type="project" value="UniProtKB-UniRule"/>
</dbReference>
<dbReference type="CDD" id="cd00477">
    <property type="entry name" value="FTHFS"/>
    <property type="match status" value="1"/>
</dbReference>
<dbReference type="FunFam" id="3.30.1510.10:FF:000001">
    <property type="entry name" value="Formate--tetrahydrofolate ligase"/>
    <property type="match status" value="1"/>
</dbReference>
<dbReference type="FunFam" id="3.10.410.10:FF:000001">
    <property type="entry name" value="Putative formate--tetrahydrofolate ligase"/>
    <property type="match status" value="1"/>
</dbReference>
<dbReference type="Gene3D" id="3.30.1510.10">
    <property type="entry name" value="Domain 2, N(10)-formyltetrahydrofolate synthetase"/>
    <property type="match status" value="1"/>
</dbReference>
<dbReference type="Gene3D" id="3.10.410.10">
    <property type="entry name" value="Formyltetrahydrofolate synthetase, domain 3"/>
    <property type="match status" value="1"/>
</dbReference>
<dbReference type="Gene3D" id="3.40.50.300">
    <property type="entry name" value="P-loop containing nucleotide triphosphate hydrolases"/>
    <property type="match status" value="1"/>
</dbReference>
<dbReference type="HAMAP" id="MF_01543">
    <property type="entry name" value="FTHFS"/>
    <property type="match status" value="1"/>
</dbReference>
<dbReference type="InterPro" id="IPR000559">
    <property type="entry name" value="Formate_THF_ligase"/>
</dbReference>
<dbReference type="InterPro" id="IPR020628">
    <property type="entry name" value="Formate_THF_ligase_CS"/>
</dbReference>
<dbReference type="InterPro" id="IPR027417">
    <property type="entry name" value="P-loop_NTPase"/>
</dbReference>
<dbReference type="NCBIfam" id="NF010030">
    <property type="entry name" value="PRK13505.1"/>
    <property type="match status" value="1"/>
</dbReference>
<dbReference type="Pfam" id="PF01268">
    <property type="entry name" value="FTHFS"/>
    <property type="match status" value="1"/>
</dbReference>
<dbReference type="SUPFAM" id="SSF52540">
    <property type="entry name" value="P-loop containing nucleoside triphosphate hydrolases"/>
    <property type="match status" value="1"/>
</dbReference>
<dbReference type="PROSITE" id="PS00721">
    <property type="entry name" value="FTHFS_1"/>
    <property type="match status" value="1"/>
</dbReference>
<dbReference type="PROSITE" id="PS00722">
    <property type="entry name" value="FTHFS_2"/>
    <property type="match status" value="1"/>
</dbReference>